<accession>Q4QLA3</accession>
<protein>
    <recommendedName>
        <fullName evidence="1">Succinate--CoA ligase [ADP-forming] subunit beta</fullName>
        <ecNumber evidence="1">6.2.1.5</ecNumber>
    </recommendedName>
    <alternativeName>
        <fullName evidence="1">Succinyl-CoA synthetase subunit beta</fullName>
        <shortName evidence="1">SCS-beta</shortName>
    </alternativeName>
</protein>
<name>SUCC_HAEI8</name>
<proteinExistence type="inferred from homology"/>
<keyword id="KW-0067">ATP-binding</keyword>
<keyword id="KW-0436">Ligase</keyword>
<keyword id="KW-0460">Magnesium</keyword>
<keyword id="KW-0479">Metal-binding</keyword>
<keyword id="KW-0547">Nucleotide-binding</keyword>
<keyword id="KW-0816">Tricarboxylic acid cycle</keyword>
<evidence type="ECO:0000255" key="1">
    <source>
        <dbReference type="HAMAP-Rule" id="MF_00558"/>
    </source>
</evidence>
<gene>
    <name evidence="1" type="primary">sucC</name>
    <name type="ordered locus">NTHI1367</name>
</gene>
<organism>
    <name type="scientific">Haemophilus influenzae (strain 86-028NP)</name>
    <dbReference type="NCBI Taxonomy" id="281310"/>
    <lineage>
        <taxon>Bacteria</taxon>
        <taxon>Pseudomonadati</taxon>
        <taxon>Pseudomonadota</taxon>
        <taxon>Gammaproteobacteria</taxon>
        <taxon>Pasteurellales</taxon>
        <taxon>Pasteurellaceae</taxon>
        <taxon>Haemophilus</taxon>
    </lineage>
</organism>
<sequence>MNLHEYQAKQLFEHYGLPVKNGAVCQSVEDVDLVLAQLSGDKWAAKCQVHAGGRGKAGGVKLVQDVEEARAFAEKWLGQRLVTFQTDKLGQPVNQIYFEETCDIDKEFYLSAVVDRASQKVMFIASPAGGMNIEEVAQNSLHLLHKVEIDPLFGGLPYQGRELAFKLGLSGTQNKQFTDIFMGLSRLFLEKDLSLVEVNPLVLTKQGYLVCLDAKISVDDNALFRHKDLLALQDLTQNDAREAEAEKFQLNYVALEGDIGCMVNGAGLAMGTMDIVKLYGGKPANFLDVGGGATKERVAEAFKIILTDPSVKVILVNIFGGIVRCDLIAEGVIAAVNEVGVRVPVVVRLEGTNAEMGRQILAQSDVNILTAQSLQQAAELAVNAAKGEH</sequence>
<comment type="function">
    <text evidence="1">Succinyl-CoA synthetase functions in the citric acid cycle (TCA), coupling the hydrolysis of succinyl-CoA to the synthesis of either ATP or GTP and thus represents the only step of substrate-level phosphorylation in the TCA. The beta subunit provides nucleotide specificity of the enzyme and binds the substrate succinate, while the binding sites for coenzyme A and phosphate are found in the alpha subunit.</text>
</comment>
<comment type="catalytic activity">
    <reaction evidence="1">
        <text>succinate + ATP + CoA = succinyl-CoA + ADP + phosphate</text>
        <dbReference type="Rhea" id="RHEA:17661"/>
        <dbReference type="ChEBI" id="CHEBI:30031"/>
        <dbReference type="ChEBI" id="CHEBI:30616"/>
        <dbReference type="ChEBI" id="CHEBI:43474"/>
        <dbReference type="ChEBI" id="CHEBI:57287"/>
        <dbReference type="ChEBI" id="CHEBI:57292"/>
        <dbReference type="ChEBI" id="CHEBI:456216"/>
        <dbReference type="EC" id="6.2.1.5"/>
    </reaction>
    <physiologicalReaction direction="right-to-left" evidence="1">
        <dbReference type="Rhea" id="RHEA:17663"/>
    </physiologicalReaction>
</comment>
<comment type="catalytic activity">
    <reaction evidence="1">
        <text>GTP + succinate + CoA = succinyl-CoA + GDP + phosphate</text>
        <dbReference type="Rhea" id="RHEA:22120"/>
        <dbReference type="ChEBI" id="CHEBI:30031"/>
        <dbReference type="ChEBI" id="CHEBI:37565"/>
        <dbReference type="ChEBI" id="CHEBI:43474"/>
        <dbReference type="ChEBI" id="CHEBI:57287"/>
        <dbReference type="ChEBI" id="CHEBI:57292"/>
        <dbReference type="ChEBI" id="CHEBI:58189"/>
    </reaction>
    <physiologicalReaction direction="right-to-left" evidence="1">
        <dbReference type="Rhea" id="RHEA:22122"/>
    </physiologicalReaction>
</comment>
<comment type="cofactor">
    <cofactor evidence="1">
        <name>Mg(2+)</name>
        <dbReference type="ChEBI" id="CHEBI:18420"/>
    </cofactor>
    <text evidence="1">Binds 1 Mg(2+) ion per subunit.</text>
</comment>
<comment type="pathway">
    <text evidence="1">Carbohydrate metabolism; tricarboxylic acid cycle; succinate from succinyl-CoA (ligase route): step 1/1.</text>
</comment>
<comment type="subunit">
    <text evidence="1">Heterotetramer of two alpha and two beta subunits.</text>
</comment>
<comment type="similarity">
    <text evidence="1">Belongs to the succinate/malate CoA ligase beta subunit family.</text>
</comment>
<dbReference type="EC" id="6.2.1.5" evidence="1"/>
<dbReference type="EMBL" id="CP000057">
    <property type="protein sequence ID" value="AAX88194.1"/>
    <property type="molecule type" value="Genomic_DNA"/>
</dbReference>
<dbReference type="RefSeq" id="WP_011272437.1">
    <property type="nucleotide sequence ID" value="NC_007146.2"/>
</dbReference>
<dbReference type="SMR" id="Q4QLA3"/>
<dbReference type="GeneID" id="93220199"/>
<dbReference type="KEGG" id="hit:NTHI1367"/>
<dbReference type="HOGENOM" id="CLU_037430_0_2_6"/>
<dbReference type="UniPathway" id="UPA00223">
    <property type="reaction ID" value="UER00999"/>
</dbReference>
<dbReference type="Proteomes" id="UP000002525">
    <property type="component" value="Chromosome"/>
</dbReference>
<dbReference type="GO" id="GO:0005829">
    <property type="term" value="C:cytosol"/>
    <property type="evidence" value="ECO:0007669"/>
    <property type="project" value="TreeGrafter"/>
</dbReference>
<dbReference type="GO" id="GO:0042709">
    <property type="term" value="C:succinate-CoA ligase complex"/>
    <property type="evidence" value="ECO:0007669"/>
    <property type="project" value="TreeGrafter"/>
</dbReference>
<dbReference type="GO" id="GO:0005524">
    <property type="term" value="F:ATP binding"/>
    <property type="evidence" value="ECO:0007669"/>
    <property type="project" value="UniProtKB-UniRule"/>
</dbReference>
<dbReference type="GO" id="GO:0000287">
    <property type="term" value="F:magnesium ion binding"/>
    <property type="evidence" value="ECO:0007669"/>
    <property type="project" value="UniProtKB-UniRule"/>
</dbReference>
<dbReference type="GO" id="GO:0004775">
    <property type="term" value="F:succinate-CoA ligase (ADP-forming) activity"/>
    <property type="evidence" value="ECO:0007669"/>
    <property type="project" value="UniProtKB-UniRule"/>
</dbReference>
<dbReference type="GO" id="GO:0004776">
    <property type="term" value="F:succinate-CoA ligase (GDP-forming) activity"/>
    <property type="evidence" value="ECO:0007669"/>
    <property type="project" value="RHEA"/>
</dbReference>
<dbReference type="GO" id="GO:0006104">
    <property type="term" value="P:succinyl-CoA metabolic process"/>
    <property type="evidence" value="ECO:0007669"/>
    <property type="project" value="TreeGrafter"/>
</dbReference>
<dbReference type="GO" id="GO:0006099">
    <property type="term" value="P:tricarboxylic acid cycle"/>
    <property type="evidence" value="ECO:0007669"/>
    <property type="project" value="UniProtKB-UniRule"/>
</dbReference>
<dbReference type="FunFam" id="3.30.1490.20:FF:000002">
    <property type="entry name" value="Succinate--CoA ligase [ADP-forming] subunit beta"/>
    <property type="match status" value="1"/>
</dbReference>
<dbReference type="FunFam" id="3.30.470.20:FF:000002">
    <property type="entry name" value="Succinate--CoA ligase [ADP-forming] subunit beta"/>
    <property type="match status" value="1"/>
</dbReference>
<dbReference type="FunFam" id="3.40.50.261:FF:000001">
    <property type="entry name" value="Succinate--CoA ligase [ADP-forming] subunit beta"/>
    <property type="match status" value="1"/>
</dbReference>
<dbReference type="Gene3D" id="3.30.1490.20">
    <property type="entry name" value="ATP-grasp fold, A domain"/>
    <property type="match status" value="1"/>
</dbReference>
<dbReference type="Gene3D" id="3.30.470.20">
    <property type="entry name" value="ATP-grasp fold, B domain"/>
    <property type="match status" value="1"/>
</dbReference>
<dbReference type="Gene3D" id="3.40.50.261">
    <property type="entry name" value="Succinyl-CoA synthetase domains"/>
    <property type="match status" value="1"/>
</dbReference>
<dbReference type="HAMAP" id="MF_00558">
    <property type="entry name" value="Succ_CoA_beta"/>
    <property type="match status" value="1"/>
</dbReference>
<dbReference type="InterPro" id="IPR013650">
    <property type="entry name" value="ATP-grasp_succ-CoA_synth-type"/>
</dbReference>
<dbReference type="InterPro" id="IPR013815">
    <property type="entry name" value="ATP_grasp_subdomain_1"/>
</dbReference>
<dbReference type="InterPro" id="IPR017866">
    <property type="entry name" value="Succ-CoA_synthase_bsu_CS"/>
</dbReference>
<dbReference type="InterPro" id="IPR005811">
    <property type="entry name" value="SUCC_ACL_C"/>
</dbReference>
<dbReference type="InterPro" id="IPR005809">
    <property type="entry name" value="Succ_CoA_ligase-like_bsu"/>
</dbReference>
<dbReference type="InterPro" id="IPR016102">
    <property type="entry name" value="Succinyl-CoA_synth-like"/>
</dbReference>
<dbReference type="NCBIfam" id="NF001913">
    <property type="entry name" value="PRK00696.1"/>
    <property type="match status" value="1"/>
</dbReference>
<dbReference type="NCBIfam" id="TIGR01016">
    <property type="entry name" value="sucCoAbeta"/>
    <property type="match status" value="1"/>
</dbReference>
<dbReference type="PANTHER" id="PTHR11815:SF10">
    <property type="entry name" value="SUCCINATE--COA LIGASE [GDP-FORMING] SUBUNIT BETA, MITOCHONDRIAL"/>
    <property type="match status" value="1"/>
</dbReference>
<dbReference type="PANTHER" id="PTHR11815">
    <property type="entry name" value="SUCCINYL-COA SYNTHETASE BETA CHAIN"/>
    <property type="match status" value="1"/>
</dbReference>
<dbReference type="Pfam" id="PF08442">
    <property type="entry name" value="ATP-grasp_2"/>
    <property type="match status" value="1"/>
</dbReference>
<dbReference type="Pfam" id="PF00549">
    <property type="entry name" value="Ligase_CoA"/>
    <property type="match status" value="1"/>
</dbReference>
<dbReference type="PIRSF" id="PIRSF001554">
    <property type="entry name" value="SucCS_beta"/>
    <property type="match status" value="1"/>
</dbReference>
<dbReference type="SUPFAM" id="SSF56059">
    <property type="entry name" value="Glutathione synthetase ATP-binding domain-like"/>
    <property type="match status" value="1"/>
</dbReference>
<dbReference type="SUPFAM" id="SSF52210">
    <property type="entry name" value="Succinyl-CoA synthetase domains"/>
    <property type="match status" value="1"/>
</dbReference>
<dbReference type="PROSITE" id="PS01217">
    <property type="entry name" value="SUCCINYL_COA_LIG_3"/>
    <property type="match status" value="1"/>
</dbReference>
<reference key="1">
    <citation type="journal article" date="2005" name="J. Bacteriol.">
        <title>Genomic sequence of an otitis media isolate of nontypeable Haemophilus influenzae: comparative study with H. influenzae serotype d, strain KW20.</title>
        <authorList>
            <person name="Harrison A."/>
            <person name="Dyer D.W."/>
            <person name="Gillaspy A."/>
            <person name="Ray W.C."/>
            <person name="Mungur R."/>
            <person name="Carson M.B."/>
            <person name="Zhong H."/>
            <person name="Gipson J."/>
            <person name="Gipson M."/>
            <person name="Johnson L.S."/>
            <person name="Lewis L."/>
            <person name="Bakaletz L.O."/>
            <person name="Munson R.S. Jr."/>
        </authorList>
    </citation>
    <scope>NUCLEOTIDE SEQUENCE [LARGE SCALE GENOMIC DNA]</scope>
    <source>
        <strain>86-028NP</strain>
    </source>
</reference>
<feature type="chain" id="PRO_1000082097" description="Succinate--CoA ligase [ADP-forming] subunit beta">
    <location>
        <begin position="1"/>
        <end position="389"/>
    </location>
</feature>
<feature type="binding site" evidence="1">
    <location>
        <position position="46"/>
    </location>
    <ligand>
        <name>ATP</name>
        <dbReference type="ChEBI" id="CHEBI:30616"/>
    </ligand>
</feature>
<feature type="binding site" evidence="1">
    <location>
        <begin position="53"/>
        <end position="55"/>
    </location>
    <ligand>
        <name>ATP</name>
        <dbReference type="ChEBI" id="CHEBI:30616"/>
    </ligand>
</feature>
<feature type="binding site" evidence="1">
    <location>
        <position position="99"/>
    </location>
    <ligand>
        <name>ATP</name>
        <dbReference type="ChEBI" id="CHEBI:30616"/>
    </ligand>
</feature>
<feature type="binding site" evidence="1">
    <location>
        <position position="102"/>
    </location>
    <ligand>
        <name>ATP</name>
        <dbReference type="ChEBI" id="CHEBI:30616"/>
    </ligand>
</feature>
<feature type="binding site" evidence="1">
    <location>
        <position position="107"/>
    </location>
    <ligand>
        <name>ATP</name>
        <dbReference type="ChEBI" id="CHEBI:30616"/>
    </ligand>
</feature>
<feature type="binding site" evidence="1">
    <location>
        <position position="199"/>
    </location>
    <ligand>
        <name>Mg(2+)</name>
        <dbReference type="ChEBI" id="CHEBI:18420"/>
    </ligand>
</feature>
<feature type="binding site" evidence="1">
    <location>
        <position position="213"/>
    </location>
    <ligand>
        <name>Mg(2+)</name>
        <dbReference type="ChEBI" id="CHEBI:18420"/>
    </ligand>
</feature>
<feature type="binding site" evidence="1">
    <location>
        <position position="264"/>
    </location>
    <ligand>
        <name>substrate</name>
        <note>ligand shared with subunit alpha</note>
    </ligand>
</feature>
<feature type="binding site" evidence="1">
    <location>
        <begin position="321"/>
        <end position="323"/>
    </location>
    <ligand>
        <name>substrate</name>
        <note>ligand shared with subunit alpha</note>
    </ligand>
</feature>